<reference key="1">
    <citation type="journal article" date="2005" name="Arch. Microbiol.">
        <title>The genome sequence of an anaerobic aromatic-degrading denitrifying bacterium, strain EbN1.</title>
        <authorList>
            <person name="Rabus R."/>
            <person name="Kube M."/>
            <person name="Heider J."/>
            <person name="Beck A."/>
            <person name="Heitmann K."/>
            <person name="Widdel F."/>
            <person name="Reinhardt R."/>
        </authorList>
    </citation>
    <scope>NUCLEOTIDE SEQUENCE [LARGE SCALE GENOMIC DNA]</scope>
    <source>
        <strain>DSM 19018 / LMG 30748 / EbN1</strain>
    </source>
</reference>
<gene>
    <name evidence="1" type="primary">gmhA</name>
    <name type="ordered locus">AZOSEA08030</name>
    <name type="ORF">ebA1463</name>
</gene>
<keyword id="KW-0119">Carbohydrate metabolism</keyword>
<keyword id="KW-0963">Cytoplasm</keyword>
<keyword id="KW-0413">Isomerase</keyword>
<keyword id="KW-0479">Metal-binding</keyword>
<keyword id="KW-1185">Reference proteome</keyword>
<keyword id="KW-0862">Zinc</keyword>
<organism>
    <name type="scientific">Aromatoleum aromaticum (strain DSM 19018 / LMG 30748 / EbN1)</name>
    <name type="common">Azoarcus sp. (strain EbN1)</name>
    <dbReference type="NCBI Taxonomy" id="76114"/>
    <lineage>
        <taxon>Bacteria</taxon>
        <taxon>Pseudomonadati</taxon>
        <taxon>Pseudomonadota</taxon>
        <taxon>Betaproteobacteria</taxon>
        <taxon>Rhodocyclales</taxon>
        <taxon>Rhodocyclaceae</taxon>
        <taxon>Aromatoleum</taxon>
    </lineage>
</organism>
<protein>
    <recommendedName>
        <fullName evidence="1">Phosphoheptose isomerase</fullName>
        <ecNumber evidence="1">5.3.1.28</ecNumber>
    </recommendedName>
    <alternativeName>
        <fullName evidence="1">Sedoheptulose 7-phosphate isomerase</fullName>
    </alternativeName>
</protein>
<proteinExistence type="inferred from homology"/>
<name>GMHA_AROAE</name>
<evidence type="ECO:0000255" key="1">
    <source>
        <dbReference type="HAMAP-Rule" id="MF_00067"/>
    </source>
</evidence>
<accession>Q5P6Y3</accession>
<sequence>MDLIHRISRQFEDSARIKLEALEALAAPIAGAVEIMIGSLLNNGKILACGNGGSAADAQHFAAELVNRFEMERPPLAAIALTTDTSTLTSIANDYDFTQVFSKQVRALGHPGDVLLAISTSGNSPNVIEAIAAAREREMRVIALTGNDGGQIGALLDDGDVHLCVPAQRTARIQEVHLLTLHCLCDGIDCLLLGVEDQ</sequence>
<dbReference type="EC" id="5.3.1.28" evidence="1"/>
<dbReference type="EMBL" id="CR555306">
    <property type="protein sequence ID" value="CAI06928.1"/>
    <property type="molecule type" value="Genomic_DNA"/>
</dbReference>
<dbReference type="RefSeq" id="WP_011236654.1">
    <property type="nucleotide sequence ID" value="NC_006513.1"/>
</dbReference>
<dbReference type="SMR" id="Q5P6Y3"/>
<dbReference type="STRING" id="76114.ebA1463"/>
<dbReference type="KEGG" id="eba:ebA1463"/>
<dbReference type="eggNOG" id="COG0279">
    <property type="taxonomic scope" value="Bacteria"/>
</dbReference>
<dbReference type="HOGENOM" id="CLU_080999_3_1_4"/>
<dbReference type="OrthoDB" id="9810929at2"/>
<dbReference type="UniPathway" id="UPA00041">
    <property type="reaction ID" value="UER00436"/>
</dbReference>
<dbReference type="Proteomes" id="UP000006552">
    <property type="component" value="Chromosome"/>
</dbReference>
<dbReference type="GO" id="GO:0005737">
    <property type="term" value="C:cytoplasm"/>
    <property type="evidence" value="ECO:0007669"/>
    <property type="project" value="UniProtKB-SubCell"/>
</dbReference>
<dbReference type="GO" id="GO:0097367">
    <property type="term" value="F:carbohydrate derivative binding"/>
    <property type="evidence" value="ECO:0007669"/>
    <property type="project" value="InterPro"/>
</dbReference>
<dbReference type="GO" id="GO:0008968">
    <property type="term" value="F:D-sedoheptulose 7-phosphate isomerase activity"/>
    <property type="evidence" value="ECO:0007669"/>
    <property type="project" value="UniProtKB-UniRule"/>
</dbReference>
<dbReference type="GO" id="GO:0008270">
    <property type="term" value="F:zinc ion binding"/>
    <property type="evidence" value="ECO:0007669"/>
    <property type="project" value="UniProtKB-UniRule"/>
</dbReference>
<dbReference type="GO" id="GO:0005975">
    <property type="term" value="P:carbohydrate metabolic process"/>
    <property type="evidence" value="ECO:0007669"/>
    <property type="project" value="UniProtKB-UniRule"/>
</dbReference>
<dbReference type="GO" id="GO:2001061">
    <property type="term" value="P:D-glycero-D-manno-heptose 7-phosphate biosynthetic process"/>
    <property type="evidence" value="ECO:0007669"/>
    <property type="project" value="UniProtKB-UniPathway"/>
</dbReference>
<dbReference type="CDD" id="cd05006">
    <property type="entry name" value="SIS_GmhA"/>
    <property type="match status" value="1"/>
</dbReference>
<dbReference type="Gene3D" id="3.40.50.10490">
    <property type="entry name" value="Glucose-6-phosphate isomerase like protein, domain 1"/>
    <property type="match status" value="1"/>
</dbReference>
<dbReference type="HAMAP" id="MF_00067">
    <property type="entry name" value="GmhA"/>
    <property type="match status" value="1"/>
</dbReference>
<dbReference type="InterPro" id="IPR035461">
    <property type="entry name" value="GmhA/DiaA"/>
</dbReference>
<dbReference type="InterPro" id="IPR004515">
    <property type="entry name" value="Phosphoheptose_Isoase"/>
</dbReference>
<dbReference type="InterPro" id="IPR001347">
    <property type="entry name" value="SIS_dom"/>
</dbReference>
<dbReference type="InterPro" id="IPR046348">
    <property type="entry name" value="SIS_dom_sf"/>
</dbReference>
<dbReference type="InterPro" id="IPR050099">
    <property type="entry name" value="SIS_GmhA/DiaA_subfam"/>
</dbReference>
<dbReference type="NCBIfam" id="NF010546">
    <property type="entry name" value="PRK13936.1"/>
    <property type="match status" value="1"/>
</dbReference>
<dbReference type="PANTHER" id="PTHR30390:SF6">
    <property type="entry name" value="DNAA INITIATOR-ASSOCIATING PROTEIN DIAA"/>
    <property type="match status" value="1"/>
</dbReference>
<dbReference type="PANTHER" id="PTHR30390">
    <property type="entry name" value="SEDOHEPTULOSE 7-PHOSPHATE ISOMERASE / DNAA INITIATOR-ASSOCIATING FACTOR FOR REPLICATION INITIATION"/>
    <property type="match status" value="1"/>
</dbReference>
<dbReference type="Pfam" id="PF13580">
    <property type="entry name" value="SIS_2"/>
    <property type="match status" value="1"/>
</dbReference>
<dbReference type="SUPFAM" id="SSF53697">
    <property type="entry name" value="SIS domain"/>
    <property type="match status" value="1"/>
</dbReference>
<dbReference type="PROSITE" id="PS51464">
    <property type="entry name" value="SIS"/>
    <property type="match status" value="1"/>
</dbReference>
<feature type="chain" id="PRO_1000009051" description="Phosphoheptose isomerase">
    <location>
        <begin position="1"/>
        <end position="198"/>
    </location>
</feature>
<feature type="domain" description="SIS" evidence="1">
    <location>
        <begin position="36"/>
        <end position="198"/>
    </location>
</feature>
<feature type="binding site" evidence="1">
    <location>
        <begin position="51"/>
        <end position="53"/>
    </location>
    <ligand>
        <name>substrate</name>
    </ligand>
</feature>
<feature type="binding site" evidence="1">
    <location>
        <position position="60"/>
    </location>
    <ligand>
        <name>Zn(2+)</name>
        <dbReference type="ChEBI" id="CHEBI:29105"/>
    </ligand>
</feature>
<feature type="binding site" evidence="1">
    <location>
        <position position="64"/>
    </location>
    <ligand>
        <name>substrate</name>
    </ligand>
</feature>
<feature type="binding site" evidence="1">
    <location>
        <position position="64"/>
    </location>
    <ligand>
        <name>Zn(2+)</name>
        <dbReference type="ChEBI" id="CHEBI:29105"/>
    </ligand>
</feature>
<feature type="binding site" evidence="1">
    <location>
        <begin position="93"/>
        <end position="94"/>
    </location>
    <ligand>
        <name>substrate</name>
    </ligand>
</feature>
<feature type="binding site" evidence="1">
    <location>
        <begin position="119"/>
        <end position="121"/>
    </location>
    <ligand>
        <name>substrate</name>
    </ligand>
</feature>
<feature type="binding site" evidence="1">
    <location>
        <position position="124"/>
    </location>
    <ligand>
        <name>substrate</name>
    </ligand>
</feature>
<feature type="binding site" evidence="1">
    <location>
        <position position="174"/>
    </location>
    <ligand>
        <name>substrate</name>
    </ligand>
</feature>
<feature type="binding site" evidence="1">
    <location>
        <position position="174"/>
    </location>
    <ligand>
        <name>Zn(2+)</name>
        <dbReference type="ChEBI" id="CHEBI:29105"/>
    </ligand>
</feature>
<feature type="binding site" evidence="1">
    <location>
        <position position="182"/>
    </location>
    <ligand>
        <name>Zn(2+)</name>
        <dbReference type="ChEBI" id="CHEBI:29105"/>
    </ligand>
</feature>
<comment type="function">
    <text evidence="1">Catalyzes the isomerization of sedoheptulose 7-phosphate in D-glycero-D-manno-heptose 7-phosphate.</text>
</comment>
<comment type="catalytic activity">
    <reaction evidence="1">
        <text>2 D-sedoheptulose 7-phosphate = D-glycero-alpha-D-manno-heptose 7-phosphate + D-glycero-beta-D-manno-heptose 7-phosphate</text>
        <dbReference type="Rhea" id="RHEA:27489"/>
        <dbReference type="ChEBI" id="CHEBI:57483"/>
        <dbReference type="ChEBI" id="CHEBI:60203"/>
        <dbReference type="ChEBI" id="CHEBI:60204"/>
        <dbReference type="EC" id="5.3.1.28"/>
    </reaction>
</comment>
<comment type="cofactor">
    <cofactor evidence="1">
        <name>Zn(2+)</name>
        <dbReference type="ChEBI" id="CHEBI:29105"/>
    </cofactor>
    <text evidence="1">Binds 1 zinc ion per subunit.</text>
</comment>
<comment type="pathway">
    <text evidence="1">Carbohydrate biosynthesis; D-glycero-D-manno-heptose 7-phosphate biosynthesis; D-glycero-alpha-D-manno-heptose 7-phosphate and D-glycero-beta-D-manno-heptose 7-phosphate from sedoheptulose 7-phosphate: step 1/1.</text>
</comment>
<comment type="subunit">
    <text evidence="1">Homotetramer.</text>
</comment>
<comment type="subcellular location">
    <subcellularLocation>
        <location evidence="1">Cytoplasm</location>
    </subcellularLocation>
</comment>
<comment type="miscellaneous">
    <text evidence="1">The reaction produces a racemic mixture of D-glycero-alpha-D-manno-heptose 7-phosphate and D-glycero-beta-D-manno-heptose 7-phosphate.</text>
</comment>
<comment type="similarity">
    <text evidence="1">Belongs to the SIS family. GmhA subfamily.</text>
</comment>